<proteinExistence type="inferred from homology"/>
<gene>
    <name type="primary">MT-CYB</name>
    <name type="synonym">COB</name>
    <name type="synonym">CYTB</name>
    <name type="synonym">MTCYB</name>
</gene>
<reference key="1">
    <citation type="journal article" date="2004" name="J. Mammal.">
        <title>Molecular systematics of the fishing bat Myotis (Pizonyx) vivesi.</title>
        <authorList>
            <person name="Stadelmann B.Y."/>
            <person name="Herrera L.G."/>
            <person name="Arroyo-Cabrales J."/>
            <person name="Flores-Martinez J.J."/>
            <person name="May B.P."/>
            <person name="Ruedi M."/>
        </authorList>
    </citation>
    <scope>NUCLEOTIDE SEQUENCE [GENOMIC DNA]</scope>
    <source>
        <strain>Isolate Iran</strain>
        <strain>Isolate Macedonia</strain>
        <tissue>Wing</tissue>
    </source>
</reference>
<reference key="2">
    <citation type="journal article" date="1997" name="Nature">
        <title>DNA answers the call of pipistrelle bat species.</title>
        <authorList>
            <person name="Barratt E.M."/>
            <person name="Deaville R."/>
            <person name="Burland T.M."/>
            <person name="Bruford M.W."/>
            <person name="Jones G."/>
            <person name="Racey P.A."/>
            <person name="Wayne R.K."/>
        </authorList>
    </citation>
    <scope>NUCLEOTIDE SEQUENCE [GENOMIC DNA] OF 9-119 AND 282-379</scope>
</reference>
<name>CYB_PIPKU</name>
<geneLocation type="mitochondrion"/>
<evidence type="ECO:0000250" key="1"/>
<evidence type="ECO:0000250" key="2">
    <source>
        <dbReference type="UniProtKB" id="P00157"/>
    </source>
</evidence>
<evidence type="ECO:0000255" key="3">
    <source>
        <dbReference type="PROSITE-ProRule" id="PRU00967"/>
    </source>
</evidence>
<evidence type="ECO:0000255" key="4">
    <source>
        <dbReference type="PROSITE-ProRule" id="PRU00968"/>
    </source>
</evidence>
<protein>
    <recommendedName>
        <fullName>Cytochrome b</fullName>
    </recommendedName>
    <alternativeName>
        <fullName>Complex III subunit 3</fullName>
    </alternativeName>
    <alternativeName>
        <fullName>Complex III subunit III</fullName>
    </alternativeName>
    <alternativeName>
        <fullName>Cytochrome b-c1 complex subunit 3</fullName>
    </alternativeName>
    <alternativeName>
        <fullName>Ubiquinol-cytochrome-c reductase complex cytochrome b subunit</fullName>
    </alternativeName>
</protein>
<feature type="chain" id="PRO_0000061400" description="Cytochrome b">
    <location>
        <begin position="1"/>
        <end position="379"/>
    </location>
</feature>
<feature type="transmembrane region" description="Helical" evidence="2">
    <location>
        <begin position="33"/>
        <end position="53"/>
    </location>
</feature>
<feature type="transmembrane region" description="Helical" evidence="2">
    <location>
        <begin position="77"/>
        <end position="98"/>
    </location>
</feature>
<feature type="transmembrane region" description="Helical" evidence="2">
    <location>
        <begin position="113"/>
        <end position="133"/>
    </location>
</feature>
<feature type="transmembrane region" description="Helical" evidence="2">
    <location>
        <begin position="178"/>
        <end position="198"/>
    </location>
</feature>
<feature type="transmembrane region" description="Helical" evidence="2">
    <location>
        <begin position="226"/>
        <end position="246"/>
    </location>
</feature>
<feature type="transmembrane region" description="Helical" evidence="2">
    <location>
        <begin position="288"/>
        <end position="308"/>
    </location>
</feature>
<feature type="transmembrane region" description="Helical" evidence="2">
    <location>
        <begin position="320"/>
        <end position="340"/>
    </location>
</feature>
<feature type="transmembrane region" description="Helical" evidence="2">
    <location>
        <begin position="347"/>
        <end position="367"/>
    </location>
</feature>
<feature type="binding site" description="axial binding residue" evidence="2">
    <location>
        <position position="83"/>
    </location>
    <ligand>
        <name>heme b</name>
        <dbReference type="ChEBI" id="CHEBI:60344"/>
        <label>b562</label>
    </ligand>
    <ligandPart>
        <name>Fe</name>
        <dbReference type="ChEBI" id="CHEBI:18248"/>
    </ligandPart>
</feature>
<feature type="binding site" description="axial binding residue" evidence="2">
    <location>
        <position position="97"/>
    </location>
    <ligand>
        <name>heme b</name>
        <dbReference type="ChEBI" id="CHEBI:60344"/>
        <label>b566</label>
    </ligand>
    <ligandPart>
        <name>Fe</name>
        <dbReference type="ChEBI" id="CHEBI:18248"/>
    </ligandPart>
</feature>
<feature type="binding site" description="axial binding residue" evidence="2">
    <location>
        <position position="182"/>
    </location>
    <ligand>
        <name>heme b</name>
        <dbReference type="ChEBI" id="CHEBI:60344"/>
        <label>b562</label>
    </ligand>
    <ligandPart>
        <name>Fe</name>
        <dbReference type="ChEBI" id="CHEBI:18248"/>
    </ligandPart>
</feature>
<feature type="binding site" description="axial binding residue" evidence="2">
    <location>
        <position position="196"/>
    </location>
    <ligand>
        <name>heme b</name>
        <dbReference type="ChEBI" id="CHEBI:60344"/>
        <label>b566</label>
    </ligand>
    <ligandPart>
        <name>Fe</name>
        <dbReference type="ChEBI" id="CHEBI:18248"/>
    </ligandPart>
</feature>
<feature type="binding site" evidence="2">
    <location>
        <position position="201"/>
    </location>
    <ligand>
        <name>a ubiquinone</name>
        <dbReference type="ChEBI" id="CHEBI:16389"/>
    </ligand>
</feature>
<feature type="sequence variant" description="In strain: Isolate Macedonia.">
    <original>T</original>
    <variation>A</variation>
    <location>
        <position position="23"/>
    </location>
</feature>
<feature type="sequence variant" description="In strain: Isolate Macedonia.">
    <original>V</original>
    <variation>I</variation>
    <location>
        <position position="156"/>
    </location>
</feature>
<feature type="sequence variant" description="In strain: Isolate Macedonia.">
    <original>M</original>
    <variation>A</variation>
    <location>
        <position position="215"/>
    </location>
</feature>
<feature type="sequence variant" description="In strain: Isolate Macedonia.">
    <original>T</original>
    <variation>M</variation>
    <location>
        <position position="234"/>
    </location>
</feature>
<feature type="sequence variant" description="In strain: Isolate Macedonia.">
    <original>V</original>
    <variation>M</variation>
    <location>
        <position position="372"/>
    </location>
</feature>
<accession>O21217</accession>
<accession>O21216</accession>
<accession>Q7YD78</accession>
<accession>Q7YD79</accession>
<sequence length="379" mass="42762">MTNIRKTHPLIKIVNDSFIDLPTPSNISAWWNFGSLLGICLALQILTGLFLAMHYTSDTATAFSSVTHICRDVNYGWVLRYLHANGASMFFICLYLHVGRGLYYGSYLFKETWNMGVILLFAVMATAFMGYVLPWGQMSFWGATVITNLLSAIPYVGTDLVEWIWGGFSVDKATLTRFFAFHFLLPFIISALVMVHLLFLHETGSNNPTGIPSNMDMIPFHPYYTIKDILGLFTMILVLLSLVLFSPDMLGDPDNYTPANPLSTPPHIKPEWYFLFAYAILRSIPNKLGGVLALVLSILILVIIPFLHTSKQRSMTFRPLSQCLFWLLTADLLTLTWIGGQPVEHPYVIIGQLASILYFLIIIVIMPLVGLVENHLLKW</sequence>
<dbReference type="EMBL" id="AJ504444">
    <property type="protein sequence ID" value="CAD43202.1"/>
    <property type="molecule type" value="Genomic_DNA"/>
</dbReference>
<dbReference type="EMBL" id="AJ504445">
    <property type="protein sequence ID" value="CAD43203.1"/>
    <property type="molecule type" value="Genomic_DNA"/>
</dbReference>
<dbReference type="EMBL" id="U95507">
    <property type="protein sequence ID" value="AAC48744.1"/>
    <property type="molecule type" value="Genomic_DNA"/>
</dbReference>
<dbReference type="EMBL" id="U95508">
    <property type="protein sequence ID" value="AAC48745.1"/>
    <property type="molecule type" value="Genomic_DNA"/>
</dbReference>
<dbReference type="SMR" id="O21217"/>
<dbReference type="GO" id="GO:0005743">
    <property type="term" value="C:mitochondrial inner membrane"/>
    <property type="evidence" value="ECO:0007669"/>
    <property type="project" value="UniProtKB-SubCell"/>
</dbReference>
<dbReference type="GO" id="GO:0045275">
    <property type="term" value="C:respiratory chain complex III"/>
    <property type="evidence" value="ECO:0007669"/>
    <property type="project" value="InterPro"/>
</dbReference>
<dbReference type="GO" id="GO:0046872">
    <property type="term" value="F:metal ion binding"/>
    <property type="evidence" value="ECO:0007669"/>
    <property type="project" value="UniProtKB-KW"/>
</dbReference>
<dbReference type="GO" id="GO:0008121">
    <property type="term" value="F:ubiquinol-cytochrome-c reductase activity"/>
    <property type="evidence" value="ECO:0007669"/>
    <property type="project" value="InterPro"/>
</dbReference>
<dbReference type="GO" id="GO:0006122">
    <property type="term" value="P:mitochondrial electron transport, ubiquinol to cytochrome c"/>
    <property type="evidence" value="ECO:0007669"/>
    <property type="project" value="TreeGrafter"/>
</dbReference>
<dbReference type="CDD" id="cd00290">
    <property type="entry name" value="cytochrome_b_C"/>
    <property type="match status" value="1"/>
</dbReference>
<dbReference type="CDD" id="cd00284">
    <property type="entry name" value="Cytochrome_b_N"/>
    <property type="match status" value="1"/>
</dbReference>
<dbReference type="FunFam" id="1.20.810.10:FF:000002">
    <property type="entry name" value="Cytochrome b"/>
    <property type="match status" value="1"/>
</dbReference>
<dbReference type="Gene3D" id="1.20.810.10">
    <property type="entry name" value="Cytochrome Bc1 Complex, Chain C"/>
    <property type="match status" value="1"/>
</dbReference>
<dbReference type="InterPro" id="IPR005798">
    <property type="entry name" value="Cyt_b/b6_C"/>
</dbReference>
<dbReference type="InterPro" id="IPR036150">
    <property type="entry name" value="Cyt_b/b6_C_sf"/>
</dbReference>
<dbReference type="InterPro" id="IPR005797">
    <property type="entry name" value="Cyt_b/b6_N"/>
</dbReference>
<dbReference type="InterPro" id="IPR027387">
    <property type="entry name" value="Cytb/b6-like_sf"/>
</dbReference>
<dbReference type="InterPro" id="IPR030689">
    <property type="entry name" value="Cytochrome_b"/>
</dbReference>
<dbReference type="InterPro" id="IPR048260">
    <property type="entry name" value="Cytochrome_b_C_euk/bac"/>
</dbReference>
<dbReference type="InterPro" id="IPR048259">
    <property type="entry name" value="Cytochrome_b_N_euk/bac"/>
</dbReference>
<dbReference type="InterPro" id="IPR016174">
    <property type="entry name" value="Di-haem_cyt_TM"/>
</dbReference>
<dbReference type="PANTHER" id="PTHR19271">
    <property type="entry name" value="CYTOCHROME B"/>
    <property type="match status" value="1"/>
</dbReference>
<dbReference type="PANTHER" id="PTHR19271:SF16">
    <property type="entry name" value="CYTOCHROME B"/>
    <property type="match status" value="1"/>
</dbReference>
<dbReference type="Pfam" id="PF00032">
    <property type="entry name" value="Cytochrom_B_C"/>
    <property type="match status" value="1"/>
</dbReference>
<dbReference type="Pfam" id="PF00033">
    <property type="entry name" value="Cytochrome_B"/>
    <property type="match status" value="1"/>
</dbReference>
<dbReference type="PIRSF" id="PIRSF038885">
    <property type="entry name" value="COB"/>
    <property type="match status" value="1"/>
</dbReference>
<dbReference type="SUPFAM" id="SSF81648">
    <property type="entry name" value="a domain/subunit of cytochrome bc1 complex (Ubiquinol-cytochrome c reductase)"/>
    <property type="match status" value="1"/>
</dbReference>
<dbReference type="SUPFAM" id="SSF81342">
    <property type="entry name" value="Transmembrane di-heme cytochromes"/>
    <property type="match status" value="1"/>
</dbReference>
<dbReference type="PROSITE" id="PS51003">
    <property type="entry name" value="CYTB_CTER"/>
    <property type="match status" value="1"/>
</dbReference>
<dbReference type="PROSITE" id="PS51002">
    <property type="entry name" value="CYTB_NTER"/>
    <property type="match status" value="1"/>
</dbReference>
<keyword id="KW-0249">Electron transport</keyword>
<keyword id="KW-0349">Heme</keyword>
<keyword id="KW-0408">Iron</keyword>
<keyword id="KW-0472">Membrane</keyword>
<keyword id="KW-0479">Metal-binding</keyword>
<keyword id="KW-0496">Mitochondrion</keyword>
<keyword id="KW-0999">Mitochondrion inner membrane</keyword>
<keyword id="KW-0679">Respiratory chain</keyword>
<keyword id="KW-0812">Transmembrane</keyword>
<keyword id="KW-1133">Transmembrane helix</keyword>
<keyword id="KW-0813">Transport</keyword>
<keyword id="KW-0830">Ubiquinone</keyword>
<organism>
    <name type="scientific">Pipistrellus kuhlii</name>
    <name type="common">Kuhl's pipistrelle</name>
    <dbReference type="NCBI Taxonomy" id="59472"/>
    <lineage>
        <taxon>Eukaryota</taxon>
        <taxon>Metazoa</taxon>
        <taxon>Chordata</taxon>
        <taxon>Craniata</taxon>
        <taxon>Vertebrata</taxon>
        <taxon>Euteleostomi</taxon>
        <taxon>Mammalia</taxon>
        <taxon>Eutheria</taxon>
        <taxon>Laurasiatheria</taxon>
        <taxon>Chiroptera</taxon>
        <taxon>Yangochiroptera</taxon>
        <taxon>Vespertilionidae</taxon>
        <taxon>Pipistrellus</taxon>
    </lineage>
</organism>
<comment type="function">
    <text evidence="2">Component of the ubiquinol-cytochrome c reductase complex (complex III or cytochrome b-c1 complex) that is part of the mitochondrial respiratory chain. The b-c1 complex mediates electron transfer from ubiquinol to cytochrome c. Contributes to the generation of a proton gradient across the mitochondrial membrane that is then used for ATP synthesis.</text>
</comment>
<comment type="cofactor">
    <cofactor evidence="2">
        <name>heme b</name>
        <dbReference type="ChEBI" id="CHEBI:60344"/>
    </cofactor>
    <text evidence="2">Binds 2 heme b groups non-covalently.</text>
</comment>
<comment type="subunit">
    <text evidence="2">The cytochrome bc1 complex contains 11 subunits: 3 respiratory subunits (MT-CYB, CYC1 and UQCRFS1), 2 core proteins (UQCRC1 and UQCRC2) and 6 low-molecular weight proteins (UQCRH/QCR6, UQCRB/QCR7, UQCRQ/QCR8, UQCR10/QCR9, UQCR11/QCR10 and a cleavage product of UQCRFS1). This cytochrome bc1 complex then forms a dimer.</text>
</comment>
<comment type="subcellular location">
    <subcellularLocation>
        <location evidence="2">Mitochondrion inner membrane</location>
        <topology evidence="2">Multi-pass membrane protein</topology>
    </subcellularLocation>
</comment>
<comment type="miscellaneous">
    <text evidence="1">Heme 1 (or BL or b562) is low-potential and absorbs at about 562 nm, and heme 2 (or BH or b566) is high-potential and absorbs at about 566 nm.</text>
</comment>
<comment type="similarity">
    <text evidence="3 4">Belongs to the cytochrome b family.</text>
</comment>
<comment type="caution">
    <text evidence="2">The full-length protein contains only eight transmembrane helices, not nine as predicted by bioinformatics tools.</text>
</comment>